<name>DENR_NEUCR</name>
<reference key="1">
    <citation type="journal article" date="2003" name="Nucleic Acids Res.">
        <title>What's in the genome of a filamentous fungus? Analysis of the Neurospora genome sequence.</title>
        <authorList>
            <person name="Mannhaupt G."/>
            <person name="Montrone C."/>
            <person name="Haase D."/>
            <person name="Mewes H.-W."/>
            <person name="Aign V."/>
            <person name="Hoheisel J.D."/>
            <person name="Fartmann B."/>
            <person name="Nyakatura G."/>
            <person name="Kempken F."/>
            <person name="Maier J."/>
            <person name="Schulte U."/>
        </authorList>
    </citation>
    <scope>NUCLEOTIDE SEQUENCE [LARGE SCALE GENOMIC DNA]</scope>
    <source>
        <strain>ATCC 24698 / 74-OR23-1A / CBS 708.71 / DSM 1257 / FGSC 987</strain>
    </source>
</reference>
<reference key="2">
    <citation type="journal article" date="2003" name="Nature">
        <title>The genome sequence of the filamentous fungus Neurospora crassa.</title>
        <authorList>
            <person name="Galagan J.E."/>
            <person name="Calvo S.E."/>
            <person name="Borkovich K.A."/>
            <person name="Selker E.U."/>
            <person name="Read N.D."/>
            <person name="Jaffe D.B."/>
            <person name="FitzHugh W."/>
            <person name="Ma L.-J."/>
            <person name="Smirnov S."/>
            <person name="Purcell S."/>
            <person name="Rehman B."/>
            <person name="Elkins T."/>
            <person name="Engels R."/>
            <person name="Wang S."/>
            <person name="Nielsen C.B."/>
            <person name="Butler J."/>
            <person name="Endrizzi M."/>
            <person name="Qui D."/>
            <person name="Ianakiev P."/>
            <person name="Bell-Pedersen D."/>
            <person name="Nelson M.A."/>
            <person name="Werner-Washburne M."/>
            <person name="Selitrennikoff C.P."/>
            <person name="Kinsey J.A."/>
            <person name="Braun E.L."/>
            <person name="Zelter A."/>
            <person name="Schulte U."/>
            <person name="Kothe G.O."/>
            <person name="Jedd G."/>
            <person name="Mewes H.-W."/>
            <person name="Staben C."/>
            <person name="Marcotte E."/>
            <person name="Greenberg D."/>
            <person name="Roy A."/>
            <person name="Foley K."/>
            <person name="Naylor J."/>
            <person name="Stange-Thomann N."/>
            <person name="Barrett R."/>
            <person name="Gnerre S."/>
            <person name="Kamal M."/>
            <person name="Kamvysselis M."/>
            <person name="Mauceli E.W."/>
            <person name="Bielke C."/>
            <person name="Rudd S."/>
            <person name="Frishman D."/>
            <person name="Krystofova S."/>
            <person name="Rasmussen C."/>
            <person name="Metzenberg R.L."/>
            <person name="Perkins D.D."/>
            <person name="Kroken S."/>
            <person name="Cogoni C."/>
            <person name="Macino G."/>
            <person name="Catcheside D.E.A."/>
            <person name="Li W."/>
            <person name="Pratt R.J."/>
            <person name="Osmani S.A."/>
            <person name="DeSouza C.P.C."/>
            <person name="Glass N.L."/>
            <person name="Orbach M.J."/>
            <person name="Berglund J.A."/>
            <person name="Voelker R."/>
            <person name="Yarden O."/>
            <person name="Plamann M."/>
            <person name="Seiler S."/>
            <person name="Dunlap J.C."/>
            <person name="Radford A."/>
            <person name="Aramayo R."/>
            <person name="Natvig D.O."/>
            <person name="Alex L.A."/>
            <person name="Mannhaupt G."/>
            <person name="Ebbole D.J."/>
            <person name="Freitag M."/>
            <person name="Paulsen I."/>
            <person name="Sachs M.S."/>
            <person name="Lander E.S."/>
            <person name="Nusbaum C."/>
            <person name="Birren B.W."/>
        </authorList>
    </citation>
    <scope>NUCLEOTIDE SEQUENCE [LARGE SCALE GENOMIC DNA]</scope>
    <source>
        <strain>ATCC 24698 / 74-OR23-1A / CBS 708.71 / DSM 1257 / FGSC 987</strain>
    </source>
</reference>
<accession>Q9P3T4</accession>
<protein>
    <recommendedName>
        <fullName>Translation machinery-associated protein 22</fullName>
    </recommendedName>
</protein>
<dbReference type="EMBL" id="AL389890">
    <property type="protein sequence ID" value="CAB97266.1"/>
    <property type="molecule type" value="Genomic_DNA"/>
</dbReference>
<dbReference type="EMBL" id="CM002236">
    <property type="protein sequence ID" value="EAA36134.1"/>
    <property type="molecule type" value="Genomic_DNA"/>
</dbReference>
<dbReference type="PIR" id="T50946">
    <property type="entry name" value="T50946"/>
</dbReference>
<dbReference type="RefSeq" id="XP_965370.1">
    <property type="nucleotide sequence ID" value="XM_960277.3"/>
</dbReference>
<dbReference type="SMR" id="Q9P3T4"/>
<dbReference type="FunCoup" id="Q9P3T4">
    <property type="interactions" value="1162"/>
</dbReference>
<dbReference type="STRING" id="367110.Q9P3T4"/>
<dbReference type="PaxDb" id="5141-EFNCRP00000002471"/>
<dbReference type="EnsemblFungi" id="EAA36134">
    <property type="protein sequence ID" value="EAA36134"/>
    <property type="gene ID" value="NCU02984"/>
</dbReference>
<dbReference type="GeneID" id="3881495"/>
<dbReference type="KEGG" id="ncr:NCU02984"/>
<dbReference type="VEuPathDB" id="FungiDB:NCU02984"/>
<dbReference type="HOGENOM" id="CLU_073511_0_1_1"/>
<dbReference type="InParanoid" id="Q9P3T4"/>
<dbReference type="OMA" id="EVFEIDM"/>
<dbReference type="OrthoDB" id="277199at2759"/>
<dbReference type="Proteomes" id="UP000001805">
    <property type="component" value="Chromosome 1, Linkage Group I"/>
</dbReference>
<dbReference type="GO" id="GO:0005737">
    <property type="term" value="C:cytoplasm"/>
    <property type="evidence" value="ECO:0007669"/>
    <property type="project" value="UniProtKB-SubCell"/>
</dbReference>
<dbReference type="GO" id="GO:0003743">
    <property type="term" value="F:translation initiation factor activity"/>
    <property type="evidence" value="ECO:0007669"/>
    <property type="project" value="InterPro"/>
</dbReference>
<dbReference type="GO" id="GO:0001731">
    <property type="term" value="P:formation of translation preinitiation complex"/>
    <property type="evidence" value="ECO:0000318"/>
    <property type="project" value="GO_Central"/>
</dbReference>
<dbReference type="GO" id="GO:0000184">
    <property type="term" value="P:nuclear-transcribed mRNA catabolic process, nonsense-mediated decay"/>
    <property type="evidence" value="ECO:0007669"/>
    <property type="project" value="EnsemblFungi"/>
</dbReference>
<dbReference type="GO" id="GO:0032790">
    <property type="term" value="P:ribosome disassembly"/>
    <property type="evidence" value="ECO:0007669"/>
    <property type="project" value="EnsemblFungi"/>
</dbReference>
<dbReference type="GO" id="GO:0002188">
    <property type="term" value="P:translation reinitiation"/>
    <property type="evidence" value="ECO:0000318"/>
    <property type="project" value="GO_Central"/>
</dbReference>
<dbReference type="CDD" id="cd11607">
    <property type="entry name" value="DENR_C"/>
    <property type="match status" value="1"/>
</dbReference>
<dbReference type="FunFam" id="3.30.780.10:FF:000014">
    <property type="entry name" value="Translation machinery-associated protein 22"/>
    <property type="match status" value="1"/>
</dbReference>
<dbReference type="Gene3D" id="3.30.780.10">
    <property type="entry name" value="SUI1-like domain"/>
    <property type="match status" value="1"/>
</dbReference>
<dbReference type="InterPro" id="IPR050318">
    <property type="entry name" value="DENR/SUI1_TIF"/>
</dbReference>
<dbReference type="InterPro" id="IPR046447">
    <property type="entry name" value="DENR_C"/>
</dbReference>
<dbReference type="InterPro" id="IPR005873">
    <property type="entry name" value="DENR_eukaryotes"/>
</dbReference>
<dbReference type="InterPro" id="IPR048517">
    <property type="entry name" value="DENR_N"/>
</dbReference>
<dbReference type="InterPro" id="IPR001950">
    <property type="entry name" value="SUI1"/>
</dbReference>
<dbReference type="InterPro" id="IPR036877">
    <property type="entry name" value="SUI1_dom_sf"/>
</dbReference>
<dbReference type="NCBIfam" id="TIGR01159">
    <property type="entry name" value="DRP1"/>
    <property type="match status" value="1"/>
</dbReference>
<dbReference type="PANTHER" id="PTHR12789:SF0">
    <property type="entry name" value="DENSITY-REGULATED PROTEIN"/>
    <property type="match status" value="1"/>
</dbReference>
<dbReference type="PANTHER" id="PTHR12789">
    <property type="entry name" value="DENSITY-REGULATED PROTEIN HOMOLOG"/>
    <property type="match status" value="1"/>
</dbReference>
<dbReference type="Pfam" id="PF21023">
    <property type="entry name" value="DENR_N"/>
    <property type="match status" value="1"/>
</dbReference>
<dbReference type="Pfam" id="PF01253">
    <property type="entry name" value="SUI1"/>
    <property type="match status" value="1"/>
</dbReference>
<dbReference type="SUPFAM" id="SSF55159">
    <property type="entry name" value="eIF1-like"/>
    <property type="match status" value="1"/>
</dbReference>
<dbReference type="PROSITE" id="PS50296">
    <property type="entry name" value="SUI1"/>
    <property type="match status" value="1"/>
</dbReference>
<organism>
    <name type="scientific">Neurospora crassa (strain ATCC 24698 / 74-OR23-1A / CBS 708.71 / DSM 1257 / FGSC 987)</name>
    <dbReference type="NCBI Taxonomy" id="367110"/>
    <lineage>
        <taxon>Eukaryota</taxon>
        <taxon>Fungi</taxon>
        <taxon>Dikarya</taxon>
        <taxon>Ascomycota</taxon>
        <taxon>Pezizomycotina</taxon>
        <taxon>Sordariomycetes</taxon>
        <taxon>Sordariomycetidae</taxon>
        <taxon>Sordariales</taxon>
        <taxon>Sordariaceae</taxon>
        <taxon>Neurospora</taxon>
    </lineage>
</organism>
<feature type="chain" id="PRO_0000320447" description="Translation machinery-associated protein 22">
    <location>
        <begin position="1"/>
        <end position="187"/>
    </location>
</feature>
<feature type="domain" description="SUI1" evidence="2">
    <location>
        <begin position="94"/>
        <end position="165"/>
    </location>
</feature>
<comment type="subunit">
    <text evidence="1">Interacts with the 40S ribosomal subunit.</text>
</comment>
<comment type="subcellular location">
    <subcellularLocation>
        <location evidence="1">Cytoplasm</location>
    </subcellularLocation>
</comment>
<comment type="domain">
    <text>The SUI1 domain may be involved in RNA binding.</text>
</comment>
<comment type="similarity">
    <text evidence="3">Belongs to the DENR family.</text>
</comment>
<sequence>MTALTGRPVVYCGVCSLPPEYCEYGGTVKKCQQWLEKNQPTMYSRIWSPEVLEAEMASLSVEAQERAMKDAKKKAAKAEAAEQKQADKRANSVVTIKRIERNKRKYVTSVSGLEAFGLELKKVAKDFGKKFATGSSVTKVPSGGEEIVVQGDVSGEIEEFILEKYKEVPEDNIELVEDKKKKKGEGN</sequence>
<proteinExistence type="inferred from homology"/>
<gene>
    <name type="primary">tma-22</name>
    <name type="ORF">B24P7.010</name>
    <name type="ORF">NCU02984</name>
</gene>
<keyword id="KW-0963">Cytoplasm</keyword>
<keyword id="KW-1185">Reference proteome</keyword>
<evidence type="ECO:0000250" key="1"/>
<evidence type="ECO:0000255" key="2">
    <source>
        <dbReference type="PROSITE-ProRule" id="PRU00200"/>
    </source>
</evidence>
<evidence type="ECO:0000305" key="3"/>